<name>TUSB_ECO55</name>
<comment type="function">
    <text evidence="1">Part of a sulfur-relay system required for 2-thiolation of 5-methylaminomethyl-2-thiouridine (mnm(5)s(2)U) at tRNA wobble positions.</text>
</comment>
<comment type="subunit">
    <text evidence="1">Heterohexamer, formed by a dimer of trimers. The hexameric TusBCD complex contains 2 copies each of TusB, TusC and TusD. The TusBCD complex interacts with TusE.</text>
</comment>
<comment type="subcellular location">
    <subcellularLocation>
        <location evidence="1">Cytoplasm</location>
    </subcellularLocation>
</comment>
<comment type="similarity">
    <text evidence="1">Belongs to the DsrH/TusB family.</text>
</comment>
<accession>B7L4L8</accession>
<dbReference type="EMBL" id="CU928145">
    <property type="protein sequence ID" value="CAV00056.1"/>
    <property type="molecule type" value="Genomic_DNA"/>
</dbReference>
<dbReference type="RefSeq" id="WP_000903377.1">
    <property type="nucleotide sequence ID" value="NC_011748.1"/>
</dbReference>
<dbReference type="SMR" id="B7L4L8"/>
<dbReference type="GeneID" id="75206286"/>
<dbReference type="KEGG" id="eck:EC55989_3746"/>
<dbReference type="HOGENOM" id="CLU_166087_2_1_6"/>
<dbReference type="Proteomes" id="UP000000746">
    <property type="component" value="Chromosome"/>
</dbReference>
<dbReference type="GO" id="GO:1990228">
    <property type="term" value="C:sulfurtransferase complex"/>
    <property type="evidence" value="ECO:0007669"/>
    <property type="project" value="TreeGrafter"/>
</dbReference>
<dbReference type="GO" id="GO:0002143">
    <property type="term" value="P:tRNA wobble position uridine thiolation"/>
    <property type="evidence" value="ECO:0007669"/>
    <property type="project" value="InterPro"/>
</dbReference>
<dbReference type="FunFam" id="3.40.1260.10:FF:000002">
    <property type="entry name" value="Sulfurtransferase TusB"/>
    <property type="match status" value="1"/>
</dbReference>
<dbReference type="Gene3D" id="3.40.1260.10">
    <property type="entry name" value="DsrEFH-like"/>
    <property type="match status" value="1"/>
</dbReference>
<dbReference type="HAMAP" id="MF_01564">
    <property type="entry name" value="Thiourid_synth_B"/>
    <property type="match status" value="1"/>
</dbReference>
<dbReference type="InterPro" id="IPR027396">
    <property type="entry name" value="DsrEFH-like"/>
</dbReference>
<dbReference type="InterPro" id="IPR023526">
    <property type="entry name" value="Sulphur_relay_TusB"/>
</dbReference>
<dbReference type="InterPro" id="IPR007215">
    <property type="entry name" value="Sulphur_relay_TusB/DsrH"/>
</dbReference>
<dbReference type="NCBIfam" id="NF010035">
    <property type="entry name" value="PRK13510.1"/>
    <property type="match status" value="1"/>
</dbReference>
<dbReference type="NCBIfam" id="TIGR03011">
    <property type="entry name" value="sulf_tusB_dsrH"/>
    <property type="match status" value="1"/>
</dbReference>
<dbReference type="PANTHER" id="PTHR37526">
    <property type="entry name" value="PROTEIN TUSB"/>
    <property type="match status" value="1"/>
</dbReference>
<dbReference type="PANTHER" id="PTHR37526:SF1">
    <property type="entry name" value="PROTEIN TUSB"/>
    <property type="match status" value="1"/>
</dbReference>
<dbReference type="Pfam" id="PF04077">
    <property type="entry name" value="DsrH"/>
    <property type="match status" value="1"/>
</dbReference>
<dbReference type="SUPFAM" id="SSF75169">
    <property type="entry name" value="DsrEFH-like"/>
    <property type="match status" value="1"/>
</dbReference>
<proteinExistence type="inferred from homology"/>
<organism>
    <name type="scientific">Escherichia coli (strain 55989 / EAEC)</name>
    <dbReference type="NCBI Taxonomy" id="585055"/>
    <lineage>
        <taxon>Bacteria</taxon>
        <taxon>Pseudomonadati</taxon>
        <taxon>Pseudomonadota</taxon>
        <taxon>Gammaproteobacteria</taxon>
        <taxon>Enterobacterales</taxon>
        <taxon>Enterobacteriaceae</taxon>
        <taxon>Escherichia</taxon>
    </lineage>
</organism>
<sequence length="95" mass="10692">MLHTLHRSPWLTDFAALLRLLSEGDELLLLQDGVTAAVDGNRYLESLRNAPIKVYALNEDLIARGLTGQISNDIIPIDYTDFVRLTVKHSSQMAW</sequence>
<gene>
    <name evidence="1" type="primary">tusB</name>
    <name type="ordered locus">EC55989_3746</name>
</gene>
<reference key="1">
    <citation type="journal article" date="2009" name="PLoS Genet.">
        <title>Organised genome dynamics in the Escherichia coli species results in highly diverse adaptive paths.</title>
        <authorList>
            <person name="Touchon M."/>
            <person name="Hoede C."/>
            <person name="Tenaillon O."/>
            <person name="Barbe V."/>
            <person name="Baeriswyl S."/>
            <person name="Bidet P."/>
            <person name="Bingen E."/>
            <person name="Bonacorsi S."/>
            <person name="Bouchier C."/>
            <person name="Bouvet O."/>
            <person name="Calteau A."/>
            <person name="Chiapello H."/>
            <person name="Clermont O."/>
            <person name="Cruveiller S."/>
            <person name="Danchin A."/>
            <person name="Diard M."/>
            <person name="Dossat C."/>
            <person name="Karoui M.E."/>
            <person name="Frapy E."/>
            <person name="Garry L."/>
            <person name="Ghigo J.M."/>
            <person name="Gilles A.M."/>
            <person name="Johnson J."/>
            <person name="Le Bouguenec C."/>
            <person name="Lescat M."/>
            <person name="Mangenot S."/>
            <person name="Martinez-Jehanne V."/>
            <person name="Matic I."/>
            <person name="Nassif X."/>
            <person name="Oztas S."/>
            <person name="Petit M.A."/>
            <person name="Pichon C."/>
            <person name="Rouy Z."/>
            <person name="Ruf C.S."/>
            <person name="Schneider D."/>
            <person name="Tourret J."/>
            <person name="Vacherie B."/>
            <person name="Vallenet D."/>
            <person name="Medigue C."/>
            <person name="Rocha E.P.C."/>
            <person name="Denamur E."/>
        </authorList>
    </citation>
    <scope>NUCLEOTIDE SEQUENCE [LARGE SCALE GENOMIC DNA]</scope>
    <source>
        <strain>55989 / EAEC</strain>
    </source>
</reference>
<protein>
    <recommendedName>
        <fullName evidence="1">Protein TusB</fullName>
    </recommendedName>
    <alternativeName>
        <fullName evidence="1">tRNA 2-thiouridine synthesizing protein B</fullName>
    </alternativeName>
</protein>
<feature type="chain" id="PRO_1000185449" description="Protein TusB">
    <location>
        <begin position="1"/>
        <end position="95"/>
    </location>
</feature>
<keyword id="KW-0963">Cytoplasm</keyword>
<keyword id="KW-1185">Reference proteome</keyword>
<keyword id="KW-0819">tRNA processing</keyword>
<evidence type="ECO:0000255" key="1">
    <source>
        <dbReference type="HAMAP-Rule" id="MF_01564"/>
    </source>
</evidence>